<organism>
    <name type="scientific">Danio rerio</name>
    <name type="common">Zebrafish</name>
    <name type="synonym">Brachydanio rerio</name>
    <dbReference type="NCBI Taxonomy" id="7955"/>
    <lineage>
        <taxon>Eukaryota</taxon>
        <taxon>Metazoa</taxon>
        <taxon>Chordata</taxon>
        <taxon>Craniata</taxon>
        <taxon>Vertebrata</taxon>
        <taxon>Euteleostomi</taxon>
        <taxon>Actinopterygii</taxon>
        <taxon>Neopterygii</taxon>
        <taxon>Teleostei</taxon>
        <taxon>Ostariophysi</taxon>
        <taxon>Cypriniformes</taxon>
        <taxon>Danionidae</taxon>
        <taxon>Danioninae</taxon>
        <taxon>Danio</taxon>
    </lineage>
</organism>
<accession>O73792</accession>
<reference key="1">
    <citation type="journal article" date="1998" name="Dev. Dyn.">
        <title>Isolation of the zebrafish homologues for the tie-1 and tie-2 endothelium-specific receptor tyrosine kinases.</title>
        <authorList>
            <person name="Lyons M.S."/>
            <person name="Bell B."/>
            <person name="Stainier D."/>
            <person name="Peters K.G."/>
        </authorList>
    </citation>
    <scope>NUCLEOTIDE SEQUENCE [MRNA]</scope>
    <scope>TISSUE SPECIFICITY</scope>
    <source>
        <tissue>Embryo</tissue>
    </source>
</reference>
<reference key="2">
    <citation type="journal article" date="2023" name="Elife">
        <title>Svep1 is a binding ligand of Tie1 and affects specific aspects of facial lymphatic development in a Vegfc-independent manner.</title>
        <authorList>
            <person name="Hussmann M."/>
            <person name="Schulte D."/>
            <person name="Weischer S."/>
            <person name="Carlantoni C."/>
            <person name="Nakajima H."/>
            <person name="Mochizuki N."/>
            <person name="Stainier D.Y.R."/>
            <person name="Zobel T."/>
            <person name="Koch M."/>
            <person name="Schulte-Merker S."/>
        </authorList>
    </citation>
    <scope>FUNCTION</scope>
    <scope>INTERACTION WITH SVEP1</scope>
    <scope>DISRUPTION PHENOTYPE</scope>
</reference>
<sequence length="184" mass="21190">QLLQFAADVATGMHYLSDKQFIHRDLAARNVLVGDNLVAKIADFGLSRGEEVYVKKTMGRLPVRWMAIESLNYSVYTTKSDVWSFGVLLWEIVSLGGTPYCGMTCAELYEKLPQGYRMEQPRNCDDEVYELMRQCWRDRPYERPPFSQISVQLNRMQEARKAYVNMALFENFTYAGIDATAEEA</sequence>
<keyword id="KW-0037">Angiogenesis</keyword>
<keyword id="KW-0067">ATP-binding</keyword>
<keyword id="KW-1003">Cell membrane</keyword>
<keyword id="KW-0418">Kinase</keyword>
<keyword id="KW-0472">Membrane</keyword>
<keyword id="KW-0547">Nucleotide-binding</keyword>
<keyword id="KW-0597">Phosphoprotein</keyword>
<keyword id="KW-0675">Receptor</keyword>
<keyword id="KW-1185">Reference proteome</keyword>
<keyword id="KW-0808">Transferase</keyword>
<keyword id="KW-0812">Transmembrane</keyword>
<keyword id="KW-0829">Tyrosine-protein kinase</keyword>
<name>TIE1_DANRE</name>
<feature type="chain" id="PRO_0000088172" description="Tyrosine-protein kinase receptor Tie-1">
    <location>
        <begin position="1" status="less than"/>
        <end position="184"/>
    </location>
</feature>
<feature type="domain" description="Protein kinase" evidence="2">
    <location>
        <begin position="1" status="less than"/>
        <end position="164"/>
    </location>
</feature>
<feature type="active site" description="Proton acceptor" evidence="2 3">
    <location>
        <position position="25"/>
    </location>
</feature>
<feature type="modified residue" description="Phosphotyrosine; by autocatalysis" evidence="1">
    <location>
        <position position="53"/>
    </location>
</feature>
<feature type="non-terminal residue">
    <location>
        <position position="1"/>
    </location>
</feature>
<dbReference type="EC" id="2.7.10.1"/>
<dbReference type="EMBL" id="AF053633">
    <property type="protein sequence ID" value="AAC09332.1"/>
    <property type="molecule type" value="mRNA"/>
</dbReference>
<dbReference type="SMR" id="O73792"/>
<dbReference type="STRING" id="7955.ENSDARP00000147239"/>
<dbReference type="PaxDb" id="7955-ENSDARP00000016803"/>
<dbReference type="AGR" id="ZFIN:ZDB-GENE-990415-55"/>
<dbReference type="ZFIN" id="ZDB-GENE-990415-55">
    <property type="gene designation" value="tie1"/>
</dbReference>
<dbReference type="eggNOG" id="KOG0200">
    <property type="taxonomic scope" value="Eukaryota"/>
</dbReference>
<dbReference type="InParanoid" id="O73792"/>
<dbReference type="PhylomeDB" id="O73792"/>
<dbReference type="Proteomes" id="UP000000437">
    <property type="component" value="Unplaced"/>
</dbReference>
<dbReference type="GO" id="GO:0005886">
    <property type="term" value="C:plasma membrane"/>
    <property type="evidence" value="ECO:0007669"/>
    <property type="project" value="UniProtKB-SubCell"/>
</dbReference>
<dbReference type="GO" id="GO:0005524">
    <property type="term" value="F:ATP binding"/>
    <property type="evidence" value="ECO:0007669"/>
    <property type="project" value="UniProtKB-KW"/>
</dbReference>
<dbReference type="GO" id="GO:0004714">
    <property type="term" value="F:transmembrane receptor protein tyrosine kinase activity"/>
    <property type="evidence" value="ECO:0007669"/>
    <property type="project" value="UniProtKB-EC"/>
</dbReference>
<dbReference type="GO" id="GO:0001525">
    <property type="term" value="P:angiogenesis"/>
    <property type="evidence" value="ECO:0007669"/>
    <property type="project" value="UniProtKB-KW"/>
</dbReference>
<dbReference type="GO" id="GO:0001568">
    <property type="term" value="P:blood vessel development"/>
    <property type="evidence" value="ECO:0000315"/>
    <property type="project" value="ZFIN"/>
</dbReference>
<dbReference type="GO" id="GO:0071603">
    <property type="term" value="P:endothelial cell-cell adhesion"/>
    <property type="evidence" value="ECO:0000315"/>
    <property type="project" value="ZFIN"/>
</dbReference>
<dbReference type="GO" id="GO:0007507">
    <property type="term" value="P:heart development"/>
    <property type="evidence" value="ECO:0000316"/>
    <property type="project" value="ZFIN"/>
</dbReference>
<dbReference type="GO" id="GO:0001944">
    <property type="term" value="P:vasculature development"/>
    <property type="evidence" value="ECO:0000315"/>
    <property type="project" value="ZFIN"/>
</dbReference>
<dbReference type="FunFam" id="1.10.510.10:FF:000123">
    <property type="entry name" value="Tyrosine-protein kinase receptor Tie-1"/>
    <property type="match status" value="1"/>
</dbReference>
<dbReference type="Gene3D" id="1.10.510.10">
    <property type="entry name" value="Transferase(Phosphotransferase) domain 1"/>
    <property type="match status" value="1"/>
</dbReference>
<dbReference type="InterPro" id="IPR011009">
    <property type="entry name" value="Kinase-like_dom_sf"/>
</dbReference>
<dbReference type="InterPro" id="IPR000719">
    <property type="entry name" value="Prot_kinase_dom"/>
</dbReference>
<dbReference type="InterPro" id="IPR050122">
    <property type="entry name" value="RTK"/>
</dbReference>
<dbReference type="InterPro" id="IPR001245">
    <property type="entry name" value="Ser-Thr/Tyr_kinase_cat_dom"/>
</dbReference>
<dbReference type="InterPro" id="IPR008266">
    <property type="entry name" value="Tyr_kinase_AS"/>
</dbReference>
<dbReference type="InterPro" id="IPR020635">
    <property type="entry name" value="Tyr_kinase_cat_dom"/>
</dbReference>
<dbReference type="PANTHER" id="PTHR24416">
    <property type="entry name" value="TYROSINE-PROTEIN KINASE RECEPTOR"/>
    <property type="match status" value="1"/>
</dbReference>
<dbReference type="PANTHER" id="PTHR24416:SF341">
    <property type="entry name" value="TYROSINE-PROTEIN KINASE RECEPTOR TIE-1"/>
    <property type="match status" value="1"/>
</dbReference>
<dbReference type="Pfam" id="PF07714">
    <property type="entry name" value="PK_Tyr_Ser-Thr"/>
    <property type="match status" value="1"/>
</dbReference>
<dbReference type="PRINTS" id="PR00109">
    <property type="entry name" value="TYRKINASE"/>
</dbReference>
<dbReference type="SMART" id="SM00219">
    <property type="entry name" value="TyrKc"/>
    <property type="match status" value="1"/>
</dbReference>
<dbReference type="SUPFAM" id="SSF56112">
    <property type="entry name" value="Protein kinase-like (PK-like)"/>
    <property type="match status" value="1"/>
</dbReference>
<dbReference type="PROSITE" id="PS50011">
    <property type="entry name" value="PROTEIN_KINASE_DOM"/>
    <property type="match status" value="1"/>
</dbReference>
<dbReference type="PROSITE" id="PS00109">
    <property type="entry name" value="PROTEIN_KINASE_TYR"/>
    <property type="match status" value="1"/>
</dbReference>
<comment type="function">
    <text evidence="4 6">Transmembrane tyrosine-protein kinase (Probable). Required for the formation of facial lymphatic structures and brain lymphatic endothelial cells (PubMed:37097004). Also required for embryonic ventral and dorsal migration of parachordal lymphoblasts along the arterial intersegmental vessel (PubMed:37097004). Plays a role in the embryonic formation of the dorsal longitudinal anastomotic vessel (PubMed:37097004).</text>
</comment>
<comment type="catalytic activity">
    <reaction evidence="3">
        <text>L-tyrosyl-[protein] + ATP = O-phospho-L-tyrosyl-[protein] + ADP + H(+)</text>
        <dbReference type="Rhea" id="RHEA:10596"/>
        <dbReference type="Rhea" id="RHEA-COMP:10136"/>
        <dbReference type="Rhea" id="RHEA-COMP:20101"/>
        <dbReference type="ChEBI" id="CHEBI:15378"/>
        <dbReference type="ChEBI" id="CHEBI:30616"/>
        <dbReference type="ChEBI" id="CHEBI:46858"/>
        <dbReference type="ChEBI" id="CHEBI:61978"/>
        <dbReference type="ChEBI" id="CHEBI:456216"/>
        <dbReference type="EC" id="2.7.10.1"/>
    </reaction>
</comment>
<comment type="subunit">
    <text evidence="4">Interacts with svep1.</text>
</comment>
<comment type="subcellular location">
    <subcellularLocation>
        <location evidence="1">Cell membrane</location>
        <topology evidence="1">Single-pass type I membrane protein</topology>
    </subcellularLocation>
</comment>
<comment type="tissue specificity">
    <text evidence="5">Expressed in most populations of endothelial cells in 24 hours embryos, including the endocardium.</text>
</comment>
<comment type="disruption phenotype">
    <text evidence="4">Increase in the number of apln expressing endothelial cells in intersegmental vessels at 48 hpf (PubMed:37097004). In a decreased flow model, there is an increase in gaps in the dorsal longitudinal anastomotic vessel with fewer lumenized segments at 2 dpf (PubMed:37097004). Significant reduction of parachordal lymphoblasts at 2 dpf and loss of brain lymphatic endothelial cells at 3 dpf (PubMed:37097004). Increased apoptosis and reduced directional migration of parachordal lymphoblasts both dorsally and ventrally along the arterial intersegmental vessel from 2.5 to 3.5 dpf (PubMed:37097004).</text>
</comment>
<comment type="similarity">
    <text evidence="2">Belongs to the protein kinase superfamily. Tyr protein kinase family. Tie subfamily.</text>
</comment>
<gene>
    <name type="primary">tie1</name>
    <name type="synonym">tie-1</name>
</gene>
<protein>
    <recommendedName>
        <fullName>Tyrosine-protein kinase receptor Tie-1</fullName>
        <ecNumber>2.7.10.1</ecNumber>
    </recommendedName>
</protein>
<proteinExistence type="evidence at protein level"/>
<evidence type="ECO:0000250" key="1"/>
<evidence type="ECO:0000255" key="2">
    <source>
        <dbReference type="PROSITE-ProRule" id="PRU00159"/>
    </source>
</evidence>
<evidence type="ECO:0000255" key="3">
    <source>
        <dbReference type="PROSITE-ProRule" id="PRU10028"/>
    </source>
</evidence>
<evidence type="ECO:0000269" key="4">
    <source>
    </source>
</evidence>
<evidence type="ECO:0000269" key="5">
    <source>
    </source>
</evidence>
<evidence type="ECO:0000305" key="6"/>